<evidence type="ECO:0000250" key="1"/>
<evidence type="ECO:0000305" key="2"/>
<reference key="1">
    <citation type="submission" date="1997-02" db="EMBL/GenBank/DDBJ databases">
        <authorList>
            <person name="Michalowski C.B."/>
            <person name="Bohnert H.J."/>
        </authorList>
    </citation>
    <scope>NUCLEOTIDE SEQUENCE [MRNA]</scope>
</reference>
<accession>P93267</accession>
<protein>
    <recommendedName>
        <fullName>Ras-related protein Rab7A</fullName>
    </recommendedName>
</protein>
<name>RAB7_MESCR</name>
<keyword id="KW-1003">Cell membrane</keyword>
<keyword id="KW-0342">GTP-binding</keyword>
<keyword id="KW-0449">Lipoprotein</keyword>
<keyword id="KW-0472">Membrane</keyword>
<keyword id="KW-0488">Methylation</keyword>
<keyword id="KW-0547">Nucleotide-binding</keyword>
<keyword id="KW-0636">Prenylation</keyword>
<keyword id="KW-0653">Protein transport</keyword>
<keyword id="KW-0813">Transport</keyword>
<proteinExistence type="evidence at transcript level"/>
<dbReference type="EMBL" id="U87142">
    <property type="protein sequence ID" value="AAB47557.1"/>
    <property type="molecule type" value="mRNA"/>
</dbReference>
<dbReference type="PIR" id="T12579">
    <property type="entry name" value="T12579"/>
</dbReference>
<dbReference type="SMR" id="P93267"/>
<dbReference type="GO" id="GO:0005886">
    <property type="term" value="C:plasma membrane"/>
    <property type="evidence" value="ECO:0007669"/>
    <property type="project" value="UniProtKB-SubCell"/>
</dbReference>
<dbReference type="GO" id="GO:0005774">
    <property type="term" value="C:vacuolar membrane"/>
    <property type="evidence" value="ECO:0007669"/>
    <property type="project" value="TreeGrafter"/>
</dbReference>
<dbReference type="GO" id="GO:0005525">
    <property type="term" value="F:GTP binding"/>
    <property type="evidence" value="ECO:0007669"/>
    <property type="project" value="UniProtKB-KW"/>
</dbReference>
<dbReference type="GO" id="GO:0003924">
    <property type="term" value="F:GTPase activity"/>
    <property type="evidence" value="ECO:0007669"/>
    <property type="project" value="InterPro"/>
</dbReference>
<dbReference type="GO" id="GO:0015031">
    <property type="term" value="P:protein transport"/>
    <property type="evidence" value="ECO:0007669"/>
    <property type="project" value="UniProtKB-KW"/>
</dbReference>
<dbReference type="CDD" id="cd01862">
    <property type="entry name" value="Rab7"/>
    <property type="match status" value="1"/>
</dbReference>
<dbReference type="FunFam" id="3.40.50.300:FF:000295">
    <property type="entry name" value="Ras-related protein Rab7"/>
    <property type="match status" value="1"/>
</dbReference>
<dbReference type="Gene3D" id="3.40.50.300">
    <property type="entry name" value="P-loop containing nucleotide triphosphate hydrolases"/>
    <property type="match status" value="1"/>
</dbReference>
<dbReference type="InterPro" id="IPR027417">
    <property type="entry name" value="P-loop_NTPase"/>
</dbReference>
<dbReference type="InterPro" id="IPR005225">
    <property type="entry name" value="Small_GTP-bd"/>
</dbReference>
<dbReference type="InterPro" id="IPR001806">
    <property type="entry name" value="Small_GTPase"/>
</dbReference>
<dbReference type="NCBIfam" id="TIGR00231">
    <property type="entry name" value="small_GTP"/>
    <property type="match status" value="1"/>
</dbReference>
<dbReference type="PANTHER" id="PTHR47981">
    <property type="entry name" value="RAB FAMILY"/>
    <property type="match status" value="1"/>
</dbReference>
<dbReference type="PANTHER" id="PTHR47981:SF44">
    <property type="entry name" value="RAS-RELATED PROTEIN RABG3C-RELATED"/>
    <property type="match status" value="1"/>
</dbReference>
<dbReference type="Pfam" id="PF00071">
    <property type="entry name" value="Ras"/>
    <property type="match status" value="1"/>
</dbReference>
<dbReference type="PRINTS" id="PR00449">
    <property type="entry name" value="RASTRNSFRMNG"/>
</dbReference>
<dbReference type="SMART" id="SM00175">
    <property type="entry name" value="RAB"/>
    <property type="match status" value="1"/>
</dbReference>
<dbReference type="SMART" id="SM00176">
    <property type="entry name" value="RAN"/>
    <property type="match status" value="1"/>
</dbReference>
<dbReference type="SMART" id="SM00173">
    <property type="entry name" value="RAS"/>
    <property type="match status" value="1"/>
</dbReference>
<dbReference type="SMART" id="SM00174">
    <property type="entry name" value="RHO"/>
    <property type="match status" value="1"/>
</dbReference>
<dbReference type="SUPFAM" id="SSF52540">
    <property type="entry name" value="P-loop containing nucleoside triphosphate hydrolases"/>
    <property type="match status" value="1"/>
</dbReference>
<dbReference type="PROSITE" id="PS51419">
    <property type="entry name" value="RAB"/>
    <property type="match status" value="1"/>
</dbReference>
<comment type="function">
    <text evidence="1">Protein transport. Probably involved in vesicular traffic (By similarity).</text>
</comment>
<comment type="subcellular location">
    <subcellularLocation>
        <location evidence="2">Cell membrane</location>
        <topology evidence="2">Lipid-anchor</topology>
        <orientation evidence="2">Cytoplasmic side</orientation>
    </subcellularLocation>
</comment>
<comment type="similarity">
    <text evidence="2">Belongs to the small GTPase superfamily. Rab family.</text>
</comment>
<sequence length="207" mass="23188">MASRRRKLLKIIILGDSGVGKTSLMNQFVNKKFSNQYKATIGADFLTKELQFEDRLFTLQIWDTAGQERFQSLGVAFYRGADCCVLTYDVNVMKSFESLNRWREEFLIQASPADPDNFPFVLLGNKIDVDGGSGRVVSEKKAKAWCMSKGNIPYFETSAKDGTNVEEAFQCIAKNAIQNEPEEETYLPDTIDMAGSTRPQSSSACEC</sequence>
<feature type="chain" id="PRO_0000121282" description="Ras-related protein Rab7A">
    <location>
        <begin position="1"/>
        <end position="207"/>
    </location>
</feature>
<feature type="binding site" evidence="1">
    <location>
        <begin position="15"/>
        <end position="22"/>
    </location>
    <ligand>
        <name>GTP</name>
        <dbReference type="ChEBI" id="CHEBI:37565"/>
    </ligand>
</feature>
<feature type="binding site" evidence="1">
    <location>
        <begin position="63"/>
        <end position="67"/>
    </location>
    <ligand>
        <name>GTP</name>
        <dbReference type="ChEBI" id="CHEBI:37565"/>
    </ligand>
</feature>
<feature type="binding site" evidence="1">
    <location>
        <begin position="125"/>
        <end position="128"/>
    </location>
    <ligand>
        <name>GTP</name>
        <dbReference type="ChEBI" id="CHEBI:37565"/>
    </ligand>
</feature>
<feature type="modified residue" description="Cysteine methyl ester" evidence="1">
    <location>
        <position position="207"/>
    </location>
</feature>
<feature type="lipid moiety-binding region" description="S-geranylgeranyl cysteine" evidence="1">
    <location>
        <position position="205"/>
    </location>
</feature>
<feature type="lipid moiety-binding region" description="S-geranylgeranyl cysteine" evidence="1">
    <location>
        <position position="207"/>
    </location>
</feature>
<organism>
    <name type="scientific">Mesembryanthemum crystallinum</name>
    <name type="common">Common ice plant</name>
    <name type="synonym">Cryophytum crystallinum</name>
    <dbReference type="NCBI Taxonomy" id="3544"/>
    <lineage>
        <taxon>Eukaryota</taxon>
        <taxon>Viridiplantae</taxon>
        <taxon>Streptophyta</taxon>
        <taxon>Embryophyta</taxon>
        <taxon>Tracheophyta</taxon>
        <taxon>Spermatophyta</taxon>
        <taxon>Magnoliopsida</taxon>
        <taxon>eudicotyledons</taxon>
        <taxon>Gunneridae</taxon>
        <taxon>Pentapetalae</taxon>
        <taxon>Caryophyllales</taxon>
        <taxon>Aizoaceae</taxon>
        <taxon>Mesembryanthemum</taxon>
        <taxon>Mesembryanthemum subgen. Cryophytum</taxon>
    </lineage>
</organism>